<feature type="signal peptide" evidence="4">
    <location>
        <begin position="1"/>
        <end position="18"/>
    </location>
</feature>
<feature type="chain" id="PRO_0000434418" description="Cell wall protein phiA" evidence="4">
    <location>
        <begin position="19"/>
        <end position="185"/>
    </location>
</feature>
<feature type="glycosylation site" description="N-linked (GlcNAc...) asparagine" evidence="5">
    <location>
        <position position="60"/>
    </location>
</feature>
<keyword id="KW-0020">Allergen</keyword>
<keyword id="KW-0134">Cell wall</keyword>
<keyword id="KW-0325">Glycoprotein</keyword>
<keyword id="KW-0964">Secreted</keyword>
<keyword id="KW-0732">Signal</keyword>
<keyword id="KW-0749">Sporulation</keyword>
<name>PHIA_ASPFC</name>
<sequence length="185" mass="19380">MQIKSFVLAASAAATASAAACQAPTNKYFGIVAIHSGSAVQYQPFSAAKSSIFAGLNSQNASCDRPDEKSATFYIQDGSLYLYAASATPQEIFVDRSGMGQGKIGYTTGAQPAPRNSERQGWAIDSQNHLQFQGKDLIACPNSIDGAWSIWADAGVANPAGNTDCVGIAARVEDVTNPNSCVYTQ</sequence>
<gene>
    <name evidence="3" type="primary">phiA</name>
    <name evidence="7" type="ORF">AFUB_045170</name>
</gene>
<dbReference type="EMBL" id="DS499596">
    <property type="protein sequence ID" value="EDP53342.1"/>
    <property type="molecule type" value="Genomic_DNA"/>
</dbReference>
<dbReference type="Allergome" id="3672">
    <property type="allergen name" value="Asp f 34"/>
</dbReference>
<dbReference type="GlyCosmos" id="B0Y004">
    <property type="glycosylation" value="1 site, No reported glycans"/>
</dbReference>
<dbReference type="EnsemblFungi" id="EDP53342">
    <property type="protein sequence ID" value="EDP53342"/>
    <property type="gene ID" value="AFUB_045170"/>
</dbReference>
<dbReference type="VEuPathDB" id="FungiDB:AFUB_045170"/>
<dbReference type="HOGENOM" id="CLU_097238_0_0_1"/>
<dbReference type="OrthoDB" id="43835at5052"/>
<dbReference type="PhylomeDB" id="B0Y004"/>
<dbReference type="Proteomes" id="UP000001699">
    <property type="component" value="Unassembled WGS sequence"/>
</dbReference>
<dbReference type="GO" id="GO:0005576">
    <property type="term" value="C:extracellular region"/>
    <property type="evidence" value="ECO:0007669"/>
    <property type="project" value="UniProtKB-SubCell"/>
</dbReference>
<dbReference type="GO" id="GO:0030435">
    <property type="term" value="P:sporulation resulting in formation of a cellular spore"/>
    <property type="evidence" value="ECO:0007669"/>
    <property type="project" value="UniProtKB-KW"/>
</dbReference>
<dbReference type="InterPro" id="IPR052820">
    <property type="entry name" value="PhiA_domain"/>
</dbReference>
<dbReference type="PANTHER" id="PTHR42047">
    <property type="entry name" value="PROTEIN, PUTATIVE (AFU_ORTHOLOGUE AFUA_6G03560)-RELATED"/>
    <property type="match status" value="1"/>
</dbReference>
<dbReference type="PANTHER" id="PTHR42047:SF1">
    <property type="entry name" value="PROTEIN, PUTATIVE (AFU_ORTHOLOGUE AFUA_6G03560)-RELATED"/>
    <property type="match status" value="1"/>
</dbReference>
<protein>
    <recommendedName>
        <fullName evidence="6">Cell wall protein phiA</fullName>
    </recommendedName>
    <alternativeName>
        <fullName>Major allergen phiA</fullName>
    </alternativeName>
    <alternativeName>
        <fullName evidence="3">Phialide development protein A</fullName>
    </alternativeName>
    <allergenName>Asp f 34</allergenName>
</protein>
<reference key="1">
    <citation type="journal article" date="2008" name="PLoS Genet.">
        <title>Genomic islands in the pathogenic filamentous fungus Aspergillus fumigatus.</title>
        <authorList>
            <person name="Fedorova N.D."/>
            <person name="Khaldi N."/>
            <person name="Joardar V.S."/>
            <person name="Maiti R."/>
            <person name="Amedeo P."/>
            <person name="Anderson M.J."/>
            <person name="Crabtree J."/>
            <person name="Silva J.C."/>
            <person name="Badger J.H."/>
            <person name="Albarraq A."/>
            <person name="Angiuoli S."/>
            <person name="Bussey H."/>
            <person name="Bowyer P."/>
            <person name="Cotty P.J."/>
            <person name="Dyer P.S."/>
            <person name="Egan A."/>
            <person name="Galens K."/>
            <person name="Fraser-Liggett C.M."/>
            <person name="Haas B.J."/>
            <person name="Inman J.M."/>
            <person name="Kent R."/>
            <person name="Lemieux S."/>
            <person name="Malavazi I."/>
            <person name="Orvis J."/>
            <person name="Roemer T."/>
            <person name="Ronning C.M."/>
            <person name="Sundaram J.P."/>
            <person name="Sutton G."/>
            <person name="Turner G."/>
            <person name="Venter J.C."/>
            <person name="White O.R."/>
            <person name="Whitty B.R."/>
            <person name="Youngman P."/>
            <person name="Wolfe K.H."/>
            <person name="Goldman G.H."/>
            <person name="Wortman J.R."/>
            <person name="Jiang B."/>
            <person name="Denning D.W."/>
            <person name="Nierman W.C."/>
        </authorList>
    </citation>
    <scope>NUCLEOTIDE SEQUENCE [LARGE SCALE GENOMIC DNA]</scope>
    <source>
        <strain>CBS 144.89 / FGSC A1163 / CEA10</strain>
    </source>
</reference>
<comment type="function">
    <text evidence="1 3">Cell wall protein involved in development of asexual structures such as phialide and conidium development, and thus required for spore formation (By similarity). Plays a role as a general stress protectant produced by the fungus in competition with antagonistic bacteria (By similarity).</text>
</comment>
<comment type="subcellular location">
    <subcellularLocation>
        <location evidence="2">Secreted</location>
    </subcellularLocation>
    <subcellularLocation>
        <location evidence="3">Secreted</location>
        <location evidence="3">Cell wall</location>
    </subcellularLocation>
</comment>
<comment type="allergen">
    <text evidence="6">May cause an allergic reaction in human.</text>
</comment>
<comment type="similarity">
    <text evidence="6">Belongs to the phiA family.</text>
</comment>
<proteinExistence type="inferred from homology"/>
<organism evidence="8">
    <name type="scientific">Aspergillus fumigatus (strain CBS 144.89 / FGSC A1163 / CEA10)</name>
    <name type="common">Neosartorya fumigata</name>
    <dbReference type="NCBI Taxonomy" id="451804"/>
    <lineage>
        <taxon>Eukaryota</taxon>
        <taxon>Fungi</taxon>
        <taxon>Dikarya</taxon>
        <taxon>Ascomycota</taxon>
        <taxon>Pezizomycotina</taxon>
        <taxon>Eurotiomycetes</taxon>
        <taxon>Eurotiomycetidae</taxon>
        <taxon>Eurotiales</taxon>
        <taxon>Aspergillaceae</taxon>
        <taxon>Aspergillus</taxon>
        <taxon>Aspergillus subgen. Fumigati</taxon>
    </lineage>
</organism>
<evidence type="ECO:0000250" key="1">
    <source>
        <dbReference type="UniProtKB" id="A2R2S8"/>
    </source>
</evidence>
<evidence type="ECO:0000250" key="2">
    <source>
        <dbReference type="UniProtKB" id="D4AV66"/>
    </source>
</evidence>
<evidence type="ECO:0000250" key="3">
    <source>
        <dbReference type="UniProtKB" id="Q5ATP7"/>
    </source>
</evidence>
<evidence type="ECO:0000255" key="4"/>
<evidence type="ECO:0000255" key="5">
    <source>
        <dbReference type="PROSITE-ProRule" id="PRU00498"/>
    </source>
</evidence>
<evidence type="ECO:0000305" key="6"/>
<evidence type="ECO:0000312" key="7">
    <source>
        <dbReference type="EMBL" id="EDP53342.1"/>
    </source>
</evidence>
<evidence type="ECO:0000312" key="8">
    <source>
        <dbReference type="Proteomes" id="UP000001699"/>
    </source>
</evidence>
<accession>B0Y004</accession>